<organism>
    <name type="scientific">Saccharomyces cerevisiae (strain YJM789)</name>
    <name type="common">Baker's yeast</name>
    <dbReference type="NCBI Taxonomy" id="307796"/>
    <lineage>
        <taxon>Eukaryota</taxon>
        <taxon>Fungi</taxon>
        <taxon>Dikarya</taxon>
        <taxon>Ascomycota</taxon>
        <taxon>Saccharomycotina</taxon>
        <taxon>Saccharomycetes</taxon>
        <taxon>Saccharomycetales</taxon>
        <taxon>Saccharomycetaceae</taxon>
        <taxon>Saccharomyces</taxon>
    </lineage>
</organism>
<name>PURA_YEAS7</name>
<comment type="function">
    <text evidence="1">Plays an important role in the de novo pathway and in the salvage pathway of purine nucleotide biosynthesis. Catalyzes the first committed step in the biosynthesis of AMP from IMP (By similarity).</text>
</comment>
<comment type="catalytic activity">
    <reaction evidence="2">
        <text>IMP + L-aspartate + GTP = N(6)-(1,2-dicarboxyethyl)-AMP + GDP + phosphate + 2 H(+)</text>
        <dbReference type="Rhea" id="RHEA:15753"/>
        <dbReference type="ChEBI" id="CHEBI:15378"/>
        <dbReference type="ChEBI" id="CHEBI:29991"/>
        <dbReference type="ChEBI" id="CHEBI:37565"/>
        <dbReference type="ChEBI" id="CHEBI:43474"/>
        <dbReference type="ChEBI" id="CHEBI:57567"/>
        <dbReference type="ChEBI" id="CHEBI:58053"/>
        <dbReference type="ChEBI" id="CHEBI:58189"/>
        <dbReference type="EC" id="6.3.4.4"/>
    </reaction>
</comment>
<comment type="cofactor">
    <cofactor evidence="2">
        <name>Mg(2+)</name>
        <dbReference type="ChEBI" id="CHEBI:18420"/>
    </cofactor>
    <text evidence="2">Binds 1 Mg(2+) ion per subunit.</text>
</comment>
<comment type="pathway">
    <text evidence="2">Purine metabolism; AMP biosynthesis via de novo pathway; AMP from IMP: step 1/2.</text>
</comment>
<comment type="subunit">
    <text evidence="2">Homodimer.</text>
</comment>
<comment type="subcellular location">
    <subcellularLocation>
        <location evidence="2">Cytoplasm</location>
    </subcellularLocation>
</comment>
<comment type="similarity">
    <text evidence="2">Belongs to the adenylosuccinate synthetase family.</text>
</comment>
<proteinExistence type="inferred from homology"/>
<keyword id="KW-0963">Cytoplasm</keyword>
<keyword id="KW-0342">GTP-binding</keyword>
<keyword id="KW-0436">Ligase</keyword>
<keyword id="KW-0460">Magnesium</keyword>
<keyword id="KW-0479">Metal-binding</keyword>
<keyword id="KW-0547">Nucleotide-binding</keyword>
<keyword id="KW-0658">Purine biosynthesis</keyword>
<dbReference type="EC" id="6.3.4.4" evidence="2"/>
<dbReference type="EMBL" id="AAFW02000067">
    <property type="protein sequence ID" value="EDN62602.1"/>
    <property type="molecule type" value="Genomic_DNA"/>
</dbReference>
<dbReference type="SMR" id="A6ZRM0"/>
<dbReference type="HOGENOM" id="CLU_029848_3_2_1"/>
<dbReference type="UniPathway" id="UPA00075">
    <property type="reaction ID" value="UER00335"/>
</dbReference>
<dbReference type="Proteomes" id="UP000007060">
    <property type="component" value="Unassembled WGS sequence"/>
</dbReference>
<dbReference type="GO" id="GO:0005737">
    <property type="term" value="C:cytoplasm"/>
    <property type="evidence" value="ECO:0007669"/>
    <property type="project" value="UniProtKB-SubCell"/>
</dbReference>
<dbReference type="GO" id="GO:0004019">
    <property type="term" value="F:adenylosuccinate synthase activity"/>
    <property type="evidence" value="ECO:0007669"/>
    <property type="project" value="UniProtKB-UniRule"/>
</dbReference>
<dbReference type="GO" id="GO:0005525">
    <property type="term" value="F:GTP binding"/>
    <property type="evidence" value="ECO:0007669"/>
    <property type="project" value="UniProtKB-UniRule"/>
</dbReference>
<dbReference type="GO" id="GO:0000287">
    <property type="term" value="F:magnesium ion binding"/>
    <property type="evidence" value="ECO:0007669"/>
    <property type="project" value="UniProtKB-UniRule"/>
</dbReference>
<dbReference type="GO" id="GO:0044208">
    <property type="term" value="P:'de novo' AMP biosynthetic process"/>
    <property type="evidence" value="ECO:0007669"/>
    <property type="project" value="UniProtKB-UniRule"/>
</dbReference>
<dbReference type="GO" id="GO:0046040">
    <property type="term" value="P:IMP metabolic process"/>
    <property type="evidence" value="ECO:0007669"/>
    <property type="project" value="TreeGrafter"/>
</dbReference>
<dbReference type="CDD" id="cd03108">
    <property type="entry name" value="AdSS"/>
    <property type="match status" value="1"/>
</dbReference>
<dbReference type="FunFam" id="3.90.170.10:FF:000001">
    <property type="entry name" value="Adenylosuccinate synthetase"/>
    <property type="match status" value="1"/>
</dbReference>
<dbReference type="FunFam" id="1.10.300.10:FF:000002">
    <property type="entry name" value="Adenylosuccinate synthetase, chloroplastic"/>
    <property type="match status" value="1"/>
</dbReference>
<dbReference type="Gene3D" id="3.40.440.10">
    <property type="entry name" value="Adenylosuccinate Synthetase, subunit A, domain 1"/>
    <property type="match status" value="1"/>
</dbReference>
<dbReference type="Gene3D" id="1.10.300.10">
    <property type="entry name" value="Adenylosuccinate Synthetase, subunit A, domain 2"/>
    <property type="match status" value="1"/>
</dbReference>
<dbReference type="Gene3D" id="3.90.170.10">
    <property type="entry name" value="Adenylosuccinate Synthetase, subunit A, domain 3"/>
    <property type="match status" value="1"/>
</dbReference>
<dbReference type="HAMAP" id="MF_00011">
    <property type="entry name" value="Adenylosucc_synth"/>
    <property type="match status" value="1"/>
</dbReference>
<dbReference type="InterPro" id="IPR018220">
    <property type="entry name" value="Adenylosuccin_syn_GTP-bd"/>
</dbReference>
<dbReference type="InterPro" id="IPR033128">
    <property type="entry name" value="Adenylosuccin_syn_Lys_AS"/>
</dbReference>
<dbReference type="InterPro" id="IPR042109">
    <property type="entry name" value="Adenylosuccinate_synth_dom1"/>
</dbReference>
<dbReference type="InterPro" id="IPR042110">
    <property type="entry name" value="Adenylosuccinate_synth_dom2"/>
</dbReference>
<dbReference type="InterPro" id="IPR042111">
    <property type="entry name" value="Adenylosuccinate_synth_dom3"/>
</dbReference>
<dbReference type="InterPro" id="IPR001114">
    <property type="entry name" value="Adenylosuccinate_synthetase"/>
</dbReference>
<dbReference type="InterPro" id="IPR027417">
    <property type="entry name" value="P-loop_NTPase"/>
</dbReference>
<dbReference type="NCBIfam" id="NF002223">
    <property type="entry name" value="PRK01117.1"/>
    <property type="match status" value="1"/>
</dbReference>
<dbReference type="NCBIfam" id="TIGR00184">
    <property type="entry name" value="purA"/>
    <property type="match status" value="1"/>
</dbReference>
<dbReference type="PANTHER" id="PTHR11846">
    <property type="entry name" value="ADENYLOSUCCINATE SYNTHETASE"/>
    <property type="match status" value="1"/>
</dbReference>
<dbReference type="PANTHER" id="PTHR11846:SF0">
    <property type="entry name" value="ADENYLOSUCCINATE SYNTHETASE"/>
    <property type="match status" value="1"/>
</dbReference>
<dbReference type="Pfam" id="PF00709">
    <property type="entry name" value="Adenylsucc_synt"/>
    <property type="match status" value="1"/>
</dbReference>
<dbReference type="SMART" id="SM00788">
    <property type="entry name" value="Adenylsucc_synt"/>
    <property type="match status" value="1"/>
</dbReference>
<dbReference type="SUPFAM" id="SSF52540">
    <property type="entry name" value="P-loop containing nucleoside triphosphate hydrolases"/>
    <property type="match status" value="1"/>
</dbReference>
<dbReference type="PROSITE" id="PS01266">
    <property type="entry name" value="ADENYLOSUCCIN_SYN_1"/>
    <property type="match status" value="1"/>
</dbReference>
<dbReference type="PROSITE" id="PS00513">
    <property type="entry name" value="ADENYLOSUCCIN_SYN_2"/>
    <property type="match status" value="1"/>
</dbReference>
<sequence>MVNVVLGSQWGDEGKGKLVDLLVGKYDIVARCAGGNNAGHTIVVNGVKYDFHMLPSGLVNPNCQNLLGNGVVIHVPSFFKELETLEAKGLKNARSRLFVSSRAHLVFDFHQVTDKLRELELSGRSKDGKNIGTTGKGIGPTYSTKASRSGLRVHHLVNDQPGAWEEFVARYKRLLETRRQRYGDFEYDFEAKLAEYKKLREQLKPFVVDSVVFMHNAIEAKKKILVEGANALMLDIDFGTYPYVTSSNTGIGGVLTGLGIPPRTIDEIYGVVKAYTTRVGEGPFPTEQLNENGEKLQTIGAEFGVTTGRKRRCGWLDLVVLKYSTLINGYTSLNITKLDVLDTFKEIPVGISYSIQGKKLDLFPEDLNILGKVEVEYKVLPGWDQDITKITKYEDLPENAKKYLKYIEDFVGVPVEWVGTGPARESMLHKEIK</sequence>
<gene>
    <name evidence="2" type="primary">ADE12</name>
    <name type="ORF">SCY_4581</name>
</gene>
<accession>A6ZRM0</accession>
<protein>
    <recommendedName>
        <fullName evidence="2">Adenylosuccinate synthetase</fullName>
        <shortName evidence="2">AMPSase</shortName>
        <shortName evidence="2">AdSS</shortName>
        <ecNumber evidence="2">6.3.4.4</ecNumber>
    </recommendedName>
    <alternativeName>
        <fullName evidence="2">IMP--aspartate ligase</fullName>
    </alternativeName>
</protein>
<evidence type="ECO:0000250" key="1"/>
<evidence type="ECO:0000255" key="2">
    <source>
        <dbReference type="HAMAP-Rule" id="MF_03125"/>
    </source>
</evidence>
<reference key="1">
    <citation type="journal article" date="2007" name="Proc. Natl. Acad. Sci. U.S.A.">
        <title>Genome sequencing and comparative analysis of Saccharomyces cerevisiae strain YJM789.</title>
        <authorList>
            <person name="Wei W."/>
            <person name="McCusker J.H."/>
            <person name="Hyman R.W."/>
            <person name="Jones T."/>
            <person name="Ning Y."/>
            <person name="Cao Z."/>
            <person name="Gu Z."/>
            <person name="Bruno D."/>
            <person name="Miranda M."/>
            <person name="Nguyen M."/>
            <person name="Wilhelmy J."/>
            <person name="Komp C."/>
            <person name="Tamse R."/>
            <person name="Wang X."/>
            <person name="Jia P."/>
            <person name="Luedi P."/>
            <person name="Oefner P.J."/>
            <person name="David L."/>
            <person name="Dietrich F.S."/>
            <person name="Li Y."/>
            <person name="Davis R.W."/>
            <person name="Steinmetz L.M."/>
        </authorList>
    </citation>
    <scope>NUCLEOTIDE SEQUENCE [LARGE SCALE GENOMIC DNA]</scope>
    <source>
        <strain>YJM789</strain>
    </source>
</reference>
<feature type="chain" id="PRO_0000399363" description="Adenylosuccinate synthetase">
    <location>
        <begin position="1"/>
        <end position="433"/>
    </location>
</feature>
<feature type="active site" description="Proton acceptor" evidence="2">
    <location>
        <position position="12"/>
    </location>
</feature>
<feature type="active site" description="Proton donor" evidence="2">
    <location>
        <position position="40"/>
    </location>
</feature>
<feature type="binding site" evidence="2">
    <location>
        <begin position="11"/>
        <end position="17"/>
    </location>
    <ligand>
        <name>GTP</name>
        <dbReference type="ChEBI" id="CHEBI:37565"/>
    </ligand>
</feature>
<feature type="binding site" description="in other chain" evidence="2">
    <location>
        <begin position="12"/>
        <end position="15"/>
    </location>
    <ligand>
        <name>IMP</name>
        <dbReference type="ChEBI" id="CHEBI:58053"/>
        <note>ligand shared between dimeric partners</note>
    </ligand>
</feature>
<feature type="binding site" evidence="2">
    <location>
        <position position="12"/>
    </location>
    <ligand>
        <name>Mg(2+)</name>
        <dbReference type="ChEBI" id="CHEBI:18420"/>
    </ligand>
</feature>
<feature type="binding site" description="in other chain" evidence="2">
    <location>
        <begin position="37"/>
        <end position="40"/>
    </location>
    <ligand>
        <name>IMP</name>
        <dbReference type="ChEBI" id="CHEBI:58053"/>
        <note>ligand shared between dimeric partners</note>
    </ligand>
</feature>
<feature type="binding site" evidence="2">
    <location>
        <begin position="39"/>
        <end position="41"/>
    </location>
    <ligand>
        <name>GTP</name>
        <dbReference type="ChEBI" id="CHEBI:37565"/>
    </ligand>
</feature>
<feature type="binding site" evidence="2">
    <location>
        <position position="39"/>
    </location>
    <ligand>
        <name>Mg(2+)</name>
        <dbReference type="ChEBI" id="CHEBI:18420"/>
    </ligand>
</feature>
<feature type="binding site" description="in other chain" evidence="2">
    <location>
        <position position="134"/>
    </location>
    <ligand>
        <name>IMP</name>
        <dbReference type="ChEBI" id="CHEBI:58053"/>
        <note>ligand shared between dimeric partners</note>
    </ligand>
</feature>
<feature type="binding site" evidence="2">
    <location>
        <position position="148"/>
    </location>
    <ligand>
        <name>IMP</name>
        <dbReference type="ChEBI" id="CHEBI:58053"/>
        <note>ligand shared between dimeric partners</note>
    </ligand>
</feature>
<feature type="binding site" description="in other chain" evidence="2">
    <location>
        <position position="230"/>
    </location>
    <ligand>
        <name>IMP</name>
        <dbReference type="ChEBI" id="CHEBI:58053"/>
        <note>ligand shared between dimeric partners</note>
    </ligand>
</feature>
<feature type="binding site" description="in other chain" evidence="2">
    <location>
        <position position="245"/>
    </location>
    <ligand>
        <name>IMP</name>
        <dbReference type="ChEBI" id="CHEBI:58053"/>
        <note>ligand shared between dimeric partners</note>
    </ligand>
</feature>
<feature type="binding site" evidence="2">
    <location>
        <begin position="305"/>
        <end position="311"/>
    </location>
    <ligand>
        <name>substrate</name>
    </ligand>
</feature>
<feature type="binding site" description="in other chain" evidence="2">
    <location>
        <position position="309"/>
    </location>
    <ligand>
        <name>IMP</name>
        <dbReference type="ChEBI" id="CHEBI:58053"/>
        <note>ligand shared between dimeric partners</note>
    </ligand>
</feature>
<feature type="binding site" evidence="2">
    <location>
        <position position="311"/>
    </location>
    <ligand>
        <name>GTP</name>
        <dbReference type="ChEBI" id="CHEBI:37565"/>
    </ligand>
</feature>
<feature type="binding site" evidence="2">
    <location>
        <begin position="337"/>
        <end position="339"/>
    </location>
    <ligand>
        <name>GTP</name>
        <dbReference type="ChEBI" id="CHEBI:37565"/>
    </ligand>
</feature>
<feature type="binding site" evidence="2">
    <location>
        <begin position="419"/>
        <end position="421"/>
    </location>
    <ligand>
        <name>GTP</name>
        <dbReference type="ChEBI" id="CHEBI:37565"/>
    </ligand>
</feature>